<name>RS12_METLZ</name>
<accession>A2STX1</accession>
<dbReference type="EMBL" id="CP000559">
    <property type="protein sequence ID" value="ABN07777.1"/>
    <property type="molecule type" value="Genomic_DNA"/>
</dbReference>
<dbReference type="RefSeq" id="WP_011833980.1">
    <property type="nucleotide sequence ID" value="NC_008942.1"/>
</dbReference>
<dbReference type="SMR" id="A2STX1"/>
<dbReference type="STRING" id="410358.Mlab_1615"/>
<dbReference type="GeneID" id="4795383"/>
<dbReference type="KEGG" id="mla:Mlab_1615"/>
<dbReference type="eggNOG" id="arCOG04255">
    <property type="taxonomic scope" value="Archaea"/>
</dbReference>
<dbReference type="HOGENOM" id="CLU_115574_0_1_2"/>
<dbReference type="OrthoDB" id="45154at2157"/>
<dbReference type="Proteomes" id="UP000000365">
    <property type="component" value="Chromosome"/>
</dbReference>
<dbReference type="GO" id="GO:0015935">
    <property type="term" value="C:small ribosomal subunit"/>
    <property type="evidence" value="ECO:0007669"/>
    <property type="project" value="InterPro"/>
</dbReference>
<dbReference type="GO" id="GO:0019843">
    <property type="term" value="F:rRNA binding"/>
    <property type="evidence" value="ECO:0007669"/>
    <property type="project" value="UniProtKB-UniRule"/>
</dbReference>
<dbReference type="GO" id="GO:0003735">
    <property type="term" value="F:structural constituent of ribosome"/>
    <property type="evidence" value="ECO:0007669"/>
    <property type="project" value="InterPro"/>
</dbReference>
<dbReference type="GO" id="GO:0006412">
    <property type="term" value="P:translation"/>
    <property type="evidence" value="ECO:0007669"/>
    <property type="project" value="UniProtKB-UniRule"/>
</dbReference>
<dbReference type="CDD" id="cd03367">
    <property type="entry name" value="Ribosomal_S23"/>
    <property type="match status" value="1"/>
</dbReference>
<dbReference type="FunFam" id="2.40.50.140:FF:000007">
    <property type="entry name" value="40S ribosomal protein S23"/>
    <property type="match status" value="1"/>
</dbReference>
<dbReference type="Gene3D" id="2.40.50.140">
    <property type="entry name" value="Nucleic acid-binding proteins"/>
    <property type="match status" value="1"/>
</dbReference>
<dbReference type="HAMAP" id="MF_00403_A">
    <property type="entry name" value="Ribosomal_uS12_A"/>
    <property type="match status" value="1"/>
</dbReference>
<dbReference type="InterPro" id="IPR012340">
    <property type="entry name" value="NA-bd_OB-fold"/>
</dbReference>
<dbReference type="InterPro" id="IPR006032">
    <property type="entry name" value="Ribosomal_uS12"/>
</dbReference>
<dbReference type="InterPro" id="IPR022863">
    <property type="entry name" value="Ribosomal_uS12_arc"/>
</dbReference>
<dbReference type="InterPro" id="IPR005680">
    <property type="entry name" value="Ribosomal_uS12_euk/arc"/>
</dbReference>
<dbReference type="NCBIfam" id="NF003254">
    <property type="entry name" value="PRK04211.1"/>
    <property type="match status" value="1"/>
</dbReference>
<dbReference type="NCBIfam" id="TIGR00982">
    <property type="entry name" value="uS12_E_A"/>
    <property type="match status" value="1"/>
</dbReference>
<dbReference type="PANTHER" id="PTHR11652">
    <property type="entry name" value="30S RIBOSOMAL PROTEIN S12 FAMILY MEMBER"/>
    <property type="match status" value="1"/>
</dbReference>
<dbReference type="Pfam" id="PF00164">
    <property type="entry name" value="Ribosom_S12_S23"/>
    <property type="match status" value="1"/>
</dbReference>
<dbReference type="PIRSF" id="PIRSF002133">
    <property type="entry name" value="Ribosomal_S12/S23"/>
    <property type="match status" value="1"/>
</dbReference>
<dbReference type="SUPFAM" id="SSF50249">
    <property type="entry name" value="Nucleic acid-binding proteins"/>
    <property type="match status" value="1"/>
</dbReference>
<dbReference type="PROSITE" id="PS00055">
    <property type="entry name" value="RIBOSOMAL_S12"/>
    <property type="match status" value="1"/>
</dbReference>
<feature type="chain" id="PRO_0000296048" description="Small ribosomal subunit protein uS12">
    <location>
        <begin position="1"/>
        <end position="142"/>
    </location>
</feature>
<proteinExistence type="inferred from homology"/>
<reference key="1">
    <citation type="journal article" date="2009" name="Stand. Genomic Sci.">
        <title>Complete genome sequence of Methanocorpusculum labreanum type strain Z.</title>
        <authorList>
            <person name="Anderson I.J."/>
            <person name="Sieprawska-Lupa M."/>
            <person name="Goltsman E."/>
            <person name="Lapidus A."/>
            <person name="Copeland A."/>
            <person name="Glavina Del Rio T."/>
            <person name="Tice H."/>
            <person name="Dalin E."/>
            <person name="Barry K."/>
            <person name="Pitluck S."/>
            <person name="Hauser L."/>
            <person name="Land M."/>
            <person name="Lucas S."/>
            <person name="Richardson P."/>
            <person name="Whitman W.B."/>
            <person name="Kyrpides N.C."/>
        </authorList>
    </citation>
    <scope>NUCLEOTIDE SEQUENCE [LARGE SCALE GENOMIC DNA]</scope>
    <source>
        <strain>ATCC 43576 / DSM 4855 / Z</strain>
    </source>
</reference>
<evidence type="ECO:0000255" key="1">
    <source>
        <dbReference type="HAMAP-Rule" id="MF_00403"/>
    </source>
</evidence>
<evidence type="ECO:0000305" key="2"/>
<sequence length="142" mass="15327">MGQGKFAARNLVRTAKKFRWSDSVYSRRALKLKLKADPLEGAPIGRAIVLEKVGVEAKQPNSAIRKCVRVQLIKNGRQVTAFAVGDGAINFIDEHDEVTICGIGGRAGRSMGDIPGVRFVVSGVNGVSLNELVIGRAEKARR</sequence>
<comment type="function">
    <text evidence="1">With S4 and S5 plays an important role in translational accuracy. Located at the interface of the 30S and 50S subunits.</text>
</comment>
<comment type="subunit">
    <text evidence="1">Part of the 30S ribosomal subunit.</text>
</comment>
<comment type="similarity">
    <text evidence="1">Belongs to the universal ribosomal protein uS12 family.</text>
</comment>
<keyword id="KW-1185">Reference proteome</keyword>
<keyword id="KW-0687">Ribonucleoprotein</keyword>
<keyword id="KW-0689">Ribosomal protein</keyword>
<keyword id="KW-0694">RNA-binding</keyword>
<keyword id="KW-0699">rRNA-binding</keyword>
<gene>
    <name evidence="1" type="primary">rps12</name>
    <name type="ordered locus">Mlab_1615</name>
</gene>
<protein>
    <recommendedName>
        <fullName evidence="1">Small ribosomal subunit protein uS12</fullName>
    </recommendedName>
    <alternativeName>
        <fullName evidence="2">30S ribosomal protein S12</fullName>
    </alternativeName>
</protein>
<organism>
    <name type="scientific">Methanocorpusculum labreanum (strain ATCC 43576 / DSM 4855 / Z)</name>
    <dbReference type="NCBI Taxonomy" id="410358"/>
    <lineage>
        <taxon>Archaea</taxon>
        <taxon>Methanobacteriati</taxon>
        <taxon>Methanobacteriota</taxon>
        <taxon>Stenosarchaea group</taxon>
        <taxon>Methanomicrobia</taxon>
        <taxon>Methanomicrobiales</taxon>
        <taxon>Methanocorpusculaceae</taxon>
        <taxon>Methanocorpusculum</taxon>
    </lineage>
</organism>